<evidence type="ECO:0000255" key="1">
    <source>
        <dbReference type="HAMAP-Rule" id="MF_03053"/>
    </source>
</evidence>
<protein>
    <recommendedName>
        <fullName evidence="1">Cytoplasmic tRNA 2-thiolation protein 1</fullName>
        <ecNumber evidence="1">2.7.7.-</ecNumber>
    </recommendedName>
    <alternativeName>
        <fullName evidence="1">Cytoplasmic tRNA adenylyltransferase 1</fullName>
    </alternativeName>
</protein>
<keyword id="KW-0963">Cytoplasm</keyword>
<keyword id="KW-1185">Reference proteome</keyword>
<keyword id="KW-0694">RNA-binding</keyword>
<keyword id="KW-0808">Transferase</keyword>
<keyword id="KW-0819">tRNA processing</keyword>
<keyword id="KW-0820">tRNA-binding</keyword>
<reference key="1">
    <citation type="journal article" date="2004" name="Nature">
        <title>Genome evolution in yeasts.</title>
        <authorList>
            <person name="Dujon B."/>
            <person name="Sherman D."/>
            <person name="Fischer G."/>
            <person name="Durrens P."/>
            <person name="Casaregola S."/>
            <person name="Lafontaine I."/>
            <person name="de Montigny J."/>
            <person name="Marck C."/>
            <person name="Neuveglise C."/>
            <person name="Talla E."/>
            <person name="Goffard N."/>
            <person name="Frangeul L."/>
            <person name="Aigle M."/>
            <person name="Anthouard V."/>
            <person name="Babour A."/>
            <person name="Barbe V."/>
            <person name="Barnay S."/>
            <person name="Blanchin S."/>
            <person name="Beckerich J.-M."/>
            <person name="Beyne E."/>
            <person name="Bleykasten C."/>
            <person name="Boisrame A."/>
            <person name="Boyer J."/>
            <person name="Cattolico L."/>
            <person name="Confanioleri F."/>
            <person name="de Daruvar A."/>
            <person name="Despons L."/>
            <person name="Fabre E."/>
            <person name="Fairhead C."/>
            <person name="Ferry-Dumazet H."/>
            <person name="Groppi A."/>
            <person name="Hantraye F."/>
            <person name="Hennequin C."/>
            <person name="Jauniaux N."/>
            <person name="Joyet P."/>
            <person name="Kachouri R."/>
            <person name="Kerrest A."/>
            <person name="Koszul R."/>
            <person name="Lemaire M."/>
            <person name="Lesur I."/>
            <person name="Ma L."/>
            <person name="Muller H."/>
            <person name="Nicaud J.-M."/>
            <person name="Nikolski M."/>
            <person name="Oztas S."/>
            <person name="Ozier-Kalogeropoulos O."/>
            <person name="Pellenz S."/>
            <person name="Potier S."/>
            <person name="Richard G.-F."/>
            <person name="Straub M.-L."/>
            <person name="Suleau A."/>
            <person name="Swennen D."/>
            <person name="Tekaia F."/>
            <person name="Wesolowski-Louvel M."/>
            <person name="Westhof E."/>
            <person name="Wirth B."/>
            <person name="Zeniou-Meyer M."/>
            <person name="Zivanovic Y."/>
            <person name="Bolotin-Fukuhara M."/>
            <person name="Thierry A."/>
            <person name="Bouchier C."/>
            <person name="Caudron B."/>
            <person name="Scarpelli C."/>
            <person name="Gaillardin C."/>
            <person name="Weissenbach J."/>
            <person name="Wincker P."/>
            <person name="Souciet J.-L."/>
        </authorList>
    </citation>
    <scope>NUCLEOTIDE SEQUENCE [LARGE SCALE GENOMIC DNA]</scope>
    <source>
        <strain>CLIB 122 / E 150</strain>
    </source>
</reference>
<accession>Q6C8R5</accession>
<organism>
    <name type="scientific">Yarrowia lipolytica (strain CLIB 122 / E 150)</name>
    <name type="common">Yeast</name>
    <name type="synonym">Candida lipolytica</name>
    <dbReference type="NCBI Taxonomy" id="284591"/>
    <lineage>
        <taxon>Eukaryota</taxon>
        <taxon>Fungi</taxon>
        <taxon>Dikarya</taxon>
        <taxon>Ascomycota</taxon>
        <taxon>Saccharomycotina</taxon>
        <taxon>Dipodascomycetes</taxon>
        <taxon>Dipodascales</taxon>
        <taxon>Dipodascales incertae sedis</taxon>
        <taxon>Yarrowia</taxon>
    </lineage>
</organism>
<proteinExistence type="inferred from homology"/>
<comment type="function">
    <text evidence="1">Plays a central role in 2-thiolation of mcm(5)S(2)U at tRNA wobble positions of tRNA(Lys), tRNA(Glu) and tRNA(Gln). Directly binds tRNAs and probably acts by catalyzing adenylation of tRNAs, an intermediate required for 2-thiolation. It is unclear whether it acts as a sulfurtransferase that transfers sulfur from thiocarboxylated URM1 onto the uridine of tRNAs at wobble position. Prior mcm(5) tRNA modification by the elongator complex is required for 2-thiolation. May also be involved in protein urmylation.</text>
</comment>
<comment type="pathway">
    <text evidence="1">tRNA modification; 5-methoxycarbonylmethyl-2-thiouridine-tRNA biosynthesis.</text>
</comment>
<comment type="subcellular location">
    <subcellularLocation>
        <location evidence="1">Cytoplasm</location>
    </subcellularLocation>
</comment>
<comment type="similarity">
    <text evidence="1">Belongs to the TtcA family. CTU1/NCS6/ATPBD3 subfamily.</text>
</comment>
<feature type="chain" id="PRO_0000368270" description="Cytoplasmic tRNA 2-thiolation protein 1">
    <location>
        <begin position="1"/>
        <end position="365"/>
    </location>
</feature>
<dbReference type="EC" id="2.7.7.-" evidence="1"/>
<dbReference type="EMBL" id="CR382130">
    <property type="protein sequence ID" value="CAG81139.1"/>
    <property type="molecule type" value="Genomic_DNA"/>
</dbReference>
<dbReference type="RefSeq" id="XP_502947.1">
    <property type="nucleotide sequence ID" value="XM_502947.1"/>
</dbReference>
<dbReference type="SMR" id="Q6C8R5"/>
<dbReference type="FunCoup" id="Q6C8R5">
    <property type="interactions" value="462"/>
</dbReference>
<dbReference type="STRING" id="284591.Q6C8R5"/>
<dbReference type="EnsemblFungi" id="CAG81139">
    <property type="protein sequence ID" value="CAG81139"/>
    <property type="gene ID" value="YALI0_D17600g"/>
</dbReference>
<dbReference type="KEGG" id="yli:2911306"/>
<dbReference type="VEuPathDB" id="FungiDB:YALI0_D17600g"/>
<dbReference type="HOGENOM" id="CLU_026481_1_0_1"/>
<dbReference type="InParanoid" id="Q6C8R5"/>
<dbReference type="OMA" id="MGKCERC"/>
<dbReference type="OrthoDB" id="109973at4891"/>
<dbReference type="UniPathway" id="UPA00988"/>
<dbReference type="Proteomes" id="UP000001300">
    <property type="component" value="Chromosome D"/>
</dbReference>
<dbReference type="GO" id="GO:0005829">
    <property type="term" value="C:cytosol"/>
    <property type="evidence" value="ECO:0000250"/>
    <property type="project" value="UniProtKB"/>
</dbReference>
<dbReference type="GO" id="GO:0002144">
    <property type="term" value="C:cytosolic tRNA wobble base thiouridylase complex"/>
    <property type="evidence" value="ECO:0000318"/>
    <property type="project" value="GO_Central"/>
</dbReference>
<dbReference type="GO" id="GO:0016779">
    <property type="term" value="F:nucleotidyltransferase activity"/>
    <property type="evidence" value="ECO:0007669"/>
    <property type="project" value="UniProtKB-UniRule"/>
</dbReference>
<dbReference type="GO" id="GO:0000049">
    <property type="term" value="F:tRNA binding"/>
    <property type="evidence" value="ECO:0000250"/>
    <property type="project" value="UniProtKB"/>
</dbReference>
<dbReference type="GO" id="GO:0103016">
    <property type="term" value="F:tRNA-uridine 2-sulfurtransferase activity"/>
    <property type="evidence" value="ECO:0007669"/>
    <property type="project" value="EnsemblFungi"/>
</dbReference>
<dbReference type="GO" id="GO:0032447">
    <property type="term" value="P:protein urmylation"/>
    <property type="evidence" value="ECO:0007669"/>
    <property type="project" value="UniProtKB-UniRule"/>
</dbReference>
<dbReference type="GO" id="GO:0034227">
    <property type="term" value="P:tRNA thio-modification"/>
    <property type="evidence" value="ECO:0000250"/>
    <property type="project" value="UniProtKB"/>
</dbReference>
<dbReference type="GO" id="GO:0002143">
    <property type="term" value="P:tRNA wobble position uridine thiolation"/>
    <property type="evidence" value="ECO:0000318"/>
    <property type="project" value="GO_Central"/>
</dbReference>
<dbReference type="GO" id="GO:0002098">
    <property type="term" value="P:tRNA wobble uridine modification"/>
    <property type="evidence" value="ECO:0000250"/>
    <property type="project" value="UniProtKB"/>
</dbReference>
<dbReference type="CDD" id="cd01713">
    <property type="entry name" value="CTU1-like"/>
    <property type="match status" value="1"/>
</dbReference>
<dbReference type="Gene3D" id="3.40.50.620">
    <property type="entry name" value="HUPs"/>
    <property type="match status" value="1"/>
</dbReference>
<dbReference type="HAMAP" id="MF_03053">
    <property type="entry name" value="CTU1"/>
    <property type="match status" value="1"/>
</dbReference>
<dbReference type="InterPro" id="IPR056369">
    <property type="entry name" value="CTU1-like_ATP-bd"/>
</dbReference>
<dbReference type="InterPro" id="IPR032442">
    <property type="entry name" value="CTU1_C"/>
</dbReference>
<dbReference type="InterPro" id="IPR000541">
    <property type="entry name" value="Ncs6/Tuc1/Ctu1"/>
</dbReference>
<dbReference type="InterPro" id="IPR014729">
    <property type="entry name" value="Rossmann-like_a/b/a_fold"/>
</dbReference>
<dbReference type="InterPro" id="IPR011063">
    <property type="entry name" value="TilS/TtcA_N"/>
</dbReference>
<dbReference type="InterPro" id="IPR035107">
    <property type="entry name" value="tRNA_thiolation_TtcA_Ctu1"/>
</dbReference>
<dbReference type="InterPro" id="IPR020554">
    <property type="entry name" value="UPF0021_CS"/>
</dbReference>
<dbReference type="PANTHER" id="PTHR11807">
    <property type="entry name" value="ATPASES OF THE PP SUPERFAMILY-RELATED"/>
    <property type="match status" value="1"/>
</dbReference>
<dbReference type="PANTHER" id="PTHR11807:SF12">
    <property type="entry name" value="CYTOPLASMIC TRNA 2-THIOLATION PROTEIN 1"/>
    <property type="match status" value="1"/>
</dbReference>
<dbReference type="Pfam" id="PF01171">
    <property type="entry name" value="ATP_bind_3"/>
    <property type="match status" value="1"/>
</dbReference>
<dbReference type="Pfam" id="PF16503">
    <property type="entry name" value="zn-ribbon_14"/>
    <property type="match status" value="1"/>
</dbReference>
<dbReference type="PIRSF" id="PIRSF004976">
    <property type="entry name" value="ATPase_YdaO"/>
    <property type="match status" value="1"/>
</dbReference>
<dbReference type="SUPFAM" id="SSF52402">
    <property type="entry name" value="Adenine nucleotide alpha hydrolases-like"/>
    <property type="match status" value="1"/>
</dbReference>
<dbReference type="PROSITE" id="PS01263">
    <property type="entry name" value="UPF0021"/>
    <property type="match status" value="1"/>
</dbReference>
<gene>
    <name evidence="1" type="primary">NCS6</name>
    <name evidence="1" type="synonym">CTU1</name>
    <name type="ordered locus">YALI0D17600g</name>
</gene>
<name>CTU1_YARLI</name>
<sequence>MLCVLCECRKAMLKRPKTLQPICKPCFYNVFETEIHNTIVESNLFFPGERVAIGASGGKDSTVLAHVMKTLNERYNYGVDFVLLSIDEGIHGYRDDSLETVKRNKVQYDMDLEVVSYSELYGWSMDQIVAQIGNKNNCTYCGVFRRQALDRGSAKLGIAHIVTGHNADDMAETVLMNLLRGDTARLDRCTELVTGSDDSPVKRSKPLKYAYEKEIVLYAHYKKLDYFSTECTYSPEAFRGTARTLIKNLEAIRPSTIIDIIHSGEAFVLKKKKEKKGKGSVVVKAKVEEKPVPSGGCSVPLAFDSSLGLSNRCTKCGYLSHNAVCKACVLLEGLNAGRAKMQIEGDSADGAAKNIKTLEKLALSI</sequence>